<keyword id="KW-0256">Endoplasmic reticulum</keyword>
<keyword id="KW-0444">Lipid biosynthesis</keyword>
<keyword id="KW-0443">Lipid metabolism</keyword>
<keyword id="KW-0472">Membrane</keyword>
<keyword id="KW-0520">NAD</keyword>
<keyword id="KW-0560">Oxidoreductase</keyword>
<keyword id="KW-1267">Proteomics identification</keyword>
<keyword id="KW-1185">Reference proteome</keyword>
<keyword id="KW-0735">Signal-anchor</keyword>
<keyword id="KW-0752">Steroid biosynthesis</keyword>
<keyword id="KW-0812">Transmembrane</keyword>
<keyword id="KW-1133">Transmembrane helix</keyword>
<dbReference type="EC" id="1.1.1.62" evidence="3 4 5"/>
<dbReference type="EC" id="1.1.1.239" evidence="3 4 5"/>
<dbReference type="EMBL" id="L11708">
    <property type="protein sequence ID" value="AAA03562.1"/>
    <property type="molecule type" value="mRNA"/>
</dbReference>
<dbReference type="EMBL" id="L40802">
    <property type="protein sequence ID" value="AAC41917.1"/>
    <property type="molecule type" value="Genomic_DNA"/>
</dbReference>
<dbReference type="EMBL" id="L40796">
    <property type="protein sequence ID" value="AAC41917.1"/>
    <property type="status" value="JOINED"/>
    <property type="molecule type" value="Genomic_DNA"/>
</dbReference>
<dbReference type="EMBL" id="L40797">
    <property type="protein sequence ID" value="AAC41917.1"/>
    <property type="status" value="JOINED"/>
    <property type="molecule type" value="Genomic_DNA"/>
</dbReference>
<dbReference type="EMBL" id="L40798">
    <property type="protein sequence ID" value="AAC41917.1"/>
    <property type="status" value="JOINED"/>
    <property type="molecule type" value="Genomic_DNA"/>
</dbReference>
<dbReference type="EMBL" id="L40801">
    <property type="protein sequence ID" value="AAC41917.1"/>
    <property type="status" value="JOINED"/>
    <property type="molecule type" value="Genomic_DNA"/>
</dbReference>
<dbReference type="EMBL" id="AY325910">
    <property type="protein sequence ID" value="AAP78485.1"/>
    <property type="molecule type" value="Genomic_DNA"/>
</dbReference>
<dbReference type="EMBL" id="AK313109">
    <property type="protein sequence ID" value="BAG35931.1"/>
    <property type="molecule type" value="mRNA"/>
</dbReference>
<dbReference type="EMBL" id="CH471114">
    <property type="protein sequence ID" value="EAW95519.1"/>
    <property type="molecule type" value="Genomic_DNA"/>
</dbReference>
<dbReference type="EMBL" id="BC009581">
    <property type="protein sequence ID" value="AAH09581.1"/>
    <property type="molecule type" value="mRNA"/>
</dbReference>
<dbReference type="EMBL" id="BC059170">
    <property type="protein sequence ID" value="AAH59170.1"/>
    <property type="molecule type" value="mRNA"/>
</dbReference>
<dbReference type="CCDS" id="CCDS10936.1"/>
<dbReference type="PIR" id="A47287">
    <property type="entry name" value="A47287"/>
</dbReference>
<dbReference type="RefSeq" id="NP_002144.1">
    <property type="nucleotide sequence ID" value="NM_002153.3"/>
</dbReference>
<dbReference type="SMR" id="P37059"/>
<dbReference type="BioGRID" id="109527">
    <property type="interactions" value="11"/>
</dbReference>
<dbReference type="FunCoup" id="P37059">
    <property type="interactions" value="292"/>
</dbReference>
<dbReference type="IntAct" id="P37059">
    <property type="interactions" value="10"/>
</dbReference>
<dbReference type="MINT" id="P37059"/>
<dbReference type="STRING" id="9606.ENSP00000199936"/>
<dbReference type="BindingDB" id="P37059"/>
<dbReference type="ChEMBL" id="CHEMBL2789"/>
<dbReference type="DrugBank" id="DB13952">
    <property type="generic name" value="Estradiol acetate"/>
</dbReference>
<dbReference type="DrugBank" id="DB13953">
    <property type="generic name" value="Estradiol benzoate"/>
</dbReference>
<dbReference type="DrugBank" id="DB13954">
    <property type="generic name" value="Estradiol cypionate"/>
</dbReference>
<dbReference type="DrugBank" id="DB13955">
    <property type="generic name" value="Estradiol dienanthate"/>
</dbReference>
<dbReference type="DrugBank" id="DB13956">
    <property type="generic name" value="Estradiol valerate"/>
</dbReference>
<dbReference type="DrugBank" id="DB00157">
    <property type="generic name" value="NADH"/>
</dbReference>
<dbReference type="DrugCentral" id="P37059"/>
<dbReference type="GuidetoPHARMACOLOGY" id="3094"/>
<dbReference type="SwissLipids" id="SLP:000001217"/>
<dbReference type="iPTMnet" id="P37059"/>
<dbReference type="PhosphoSitePlus" id="P37059"/>
<dbReference type="BioMuta" id="HSD17B2"/>
<dbReference type="DMDM" id="544152"/>
<dbReference type="jPOST" id="P37059"/>
<dbReference type="MassIVE" id="P37059"/>
<dbReference type="PaxDb" id="9606-ENSP00000199936"/>
<dbReference type="PeptideAtlas" id="P37059"/>
<dbReference type="ProteomicsDB" id="55256"/>
<dbReference type="Antibodypedia" id="16980">
    <property type="antibodies" value="314 antibodies from 32 providers"/>
</dbReference>
<dbReference type="DNASU" id="3294"/>
<dbReference type="Ensembl" id="ENST00000199936.9">
    <property type="protein sequence ID" value="ENSP00000199936.4"/>
    <property type="gene ID" value="ENSG00000086696.11"/>
</dbReference>
<dbReference type="GeneID" id="3294"/>
<dbReference type="KEGG" id="hsa:3294"/>
<dbReference type="MANE-Select" id="ENST00000199936.9">
    <property type="protein sequence ID" value="ENSP00000199936.4"/>
    <property type="RefSeq nucleotide sequence ID" value="NM_002153.3"/>
    <property type="RefSeq protein sequence ID" value="NP_002144.1"/>
</dbReference>
<dbReference type="UCSC" id="uc002fgv.4">
    <property type="organism name" value="human"/>
</dbReference>
<dbReference type="AGR" id="HGNC:5211"/>
<dbReference type="CTD" id="3294"/>
<dbReference type="DisGeNET" id="3294"/>
<dbReference type="GeneCards" id="HSD17B2"/>
<dbReference type="HGNC" id="HGNC:5211">
    <property type="gene designation" value="HSD17B2"/>
</dbReference>
<dbReference type="HPA" id="ENSG00000086696">
    <property type="expression patterns" value="Group enriched (intestine, liver, placenta)"/>
</dbReference>
<dbReference type="MIM" id="109685">
    <property type="type" value="gene"/>
</dbReference>
<dbReference type="neXtProt" id="NX_P37059"/>
<dbReference type="OpenTargets" id="ENSG00000086696"/>
<dbReference type="PharmGKB" id="PA29479"/>
<dbReference type="VEuPathDB" id="HostDB:ENSG00000086696"/>
<dbReference type="eggNOG" id="KOG1610">
    <property type="taxonomic scope" value="Eukaryota"/>
</dbReference>
<dbReference type="GeneTree" id="ENSGT00940000160204"/>
<dbReference type="InParanoid" id="P37059"/>
<dbReference type="OMA" id="KKCMAVN"/>
<dbReference type="OrthoDB" id="9876299at2759"/>
<dbReference type="PAN-GO" id="P37059">
    <property type="GO annotations" value="4 GO annotations based on evolutionary models"/>
</dbReference>
<dbReference type="PhylomeDB" id="P37059"/>
<dbReference type="TreeFam" id="TF325617"/>
<dbReference type="BioCyc" id="MetaCyc:HS01540-MONOMER"/>
<dbReference type="BRENDA" id="1.1.1.62">
    <property type="organism ID" value="2681"/>
</dbReference>
<dbReference type="PathwayCommons" id="P37059"/>
<dbReference type="Reactome" id="R-HSA-193144">
    <property type="pathway name" value="Estrogen biosynthesis"/>
</dbReference>
<dbReference type="SABIO-RK" id="P37059"/>
<dbReference type="SignaLink" id="P37059"/>
<dbReference type="SIGNOR" id="P37059"/>
<dbReference type="BioGRID-ORCS" id="3294">
    <property type="hits" value="8 hits in 1157 CRISPR screens"/>
</dbReference>
<dbReference type="ChiTaRS" id="HSD17B2">
    <property type="organism name" value="human"/>
</dbReference>
<dbReference type="GeneWiki" id="HSD17B2"/>
<dbReference type="GenomeRNAi" id="3294"/>
<dbReference type="Pharos" id="P37059">
    <property type="development level" value="Tchem"/>
</dbReference>
<dbReference type="PRO" id="PR:P37059"/>
<dbReference type="Proteomes" id="UP000005640">
    <property type="component" value="Chromosome 16"/>
</dbReference>
<dbReference type="RNAct" id="P37059">
    <property type="molecule type" value="protein"/>
</dbReference>
<dbReference type="Bgee" id="ENSG00000086696">
    <property type="expression patterns" value="Expressed in jejunal mucosa and 102 other cell types or tissues"/>
</dbReference>
<dbReference type="ExpressionAtlas" id="P37059">
    <property type="expression patterns" value="baseline and differential"/>
</dbReference>
<dbReference type="GO" id="GO:0005789">
    <property type="term" value="C:endoplasmic reticulum membrane"/>
    <property type="evidence" value="ECO:0000314"/>
    <property type="project" value="UniProtKB"/>
</dbReference>
<dbReference type="GO" id="GO:0043231">
    <property type="term" value="C:intracellular membrane-bounded organelle"/>
    <property type="evidence" value="ECO:0000318"/>
    <property type="project" value="GO_Central"/>
</dbReference>
<dbReference type="GO" id="GO:0047006">
    <property type="term" value="F:17-alpha,20-alpha-dihydroxypregn-4-en-3-one dehydrogenase [NAD(P)+] activity"/>
    <property type="evidence" value="ECO:0000304"/>
    <property type="project" value="BHF-UCL"/>
</dbReference>
<dbReference type="GO" id="GO:0004303">
    <property type="term" value="F:estradiol 17-beta-dehydrogenase [NAD(P)+] activity"/>
    <property type="evidence" value="ECO:0000314"/>
    <property type="project" value="UniProtKB"/>
</dbReference>
<dbReference type="GO" id="GO:0047035">
    <property type="term" value="F:testosterone dehydrogenase (NAD+) activity"/>
    <property type="evidence" value="ECO:0000314"/>
    <property type="project" value="UniProtKB"/>
</dbReference>
<dbReference type="GO" id="GO:0008209">
    <property type="term" value="P:androgen metabolic process"/>
    <property type="evidence" value="ECO:0000314"/>
    <property type="project" value="UniProtKB"/>
</dbReference>
<dbReference type="GO" id="GO:0006703">
    <property type="term" value="P:estrogen biosynthetic process"/>
    <property type="evidence" value="ECO:0000314"/>
    <property type="project" value="UniProtKB"/>
</dbReference>
<dbReference type="GO" id="GO:0001701">
    <property type="term" value="P:in utero embryonic development"/>
    <property type="evidence" value="ECO:0007669"/>
    <property type="project" value="Ensembl"/>
</dbReference>
<dbReference type="GO" id="GO:0001890">
    <property type="term" value="P:placenta development"/>
    <property type="evidence" value="ECO:0007669"/>
    <property type="project" value="Ensembl"/>
</dbReference>
<dbReference type="GO" id="GO:0032526">
    <property type="term" value="P:response to retinoic acid"/>
    <property type="evidence" value="ECO:0000314"/>
    <property type="project" value="BHF-UCL"/>
</dbReference>
<dbReference type="GO" id="GO:0008202">
    <property type="term" value="P:steroid metabolic process"/>
    <property type="evidence" value="ECO:0000318"/>
    <property type="project" value="GO_Central"/>
</dbReference>
<dbReference type="CDD" id="cd09805">
    <property type="entry name" value="type2_17beta_HSD-like_SDR_c"/>
    <property type="match status" value="1"/>
</dbReference>
<dbReference type="FunFam" id="3.40.50.720:FF:000074">
    <property type="entry name" value="Retinol dehydrogenase type 1"/>
    <property type="match status" value="1"/>
</dbReference>
<dbReference type="Gene3D" id="3.40.50.720">
    <property type="entry name" value="NAD(P)-binding Rossmann-like Domain"/>
    <property type="match status" value="1"/>
</dbReference>
<dbReference type="InterPro" id="IPR036291">
    <property type="entry name" value="NAD(P)-bd_dom_sf"/>
</dbReference>
<dbReference type="InterPro" id="IPR020904">
    <property type="entry name" value="Sc_DH/Rdtase_CS"/>
</dbReference>
<dbReference type="InterPro" id="IPR002347">
    <property type="entry name" value="SDR_fam"/>
</dbReference>
<dbReference type="PANTHER" id="PTHR43313:SF3">
    <property type="entry name" value="17-BETA-HYDROXYSTEROID DEHYDROGENASE TYPE 2"/>
    <property type="match status" value="1"/>
</dbReference>
<dbReference type="PANTHER" id="PTHR43313">
    <property type="entry name" value="SHORT-CHAIN DEHYDROGENASE/REDUCTASE FAMILY 9C"/>
    <property type="match status" value="1"/>
</dbReference>
<dbReference type="Pfam" id="PF00106">
    <property type="entry name" value="adh_short"/>
    <property type="match status" value="1"/>
</dbReference>
<dbReference type="PRINTS" id="PR00081">
    <property type="entry name" value="GDHRDH"/>
</dbReference>
<dbReference type="PRINTS" id="PR00080">
    <property type="entry name" value="SDRFAMILY"/>
</dbReference>
<dbReference type="SUPFAM" id="SSF51735">
    <property type="entry name" value="NAD(P)-binding Rossmann-fold domains"/>
    <property type="match status" value="1"/>
</dbReference>
<dbReference type="PROSITE" id="PS00061">
    <property type="entry name" value="ADH_SHORT"/>
    <property type="match status" value="1"/>
</dbReference>
<protein>
    <recommendedName>
        <fullName evidence="7">17-beta-hydroxysteroid dehydrogenase type 2</fullName>
        <shortName>17-beta-HSD 2</shortName>
    </recommendedName>
    <alternativeName>
        <fullName>20 alpha-hydroxysteroid dehydrogenase</fullName>
        <shortName>20-alpha-HSD</shortName>
    </alternativeName>
    <alternativeName>
        <fullName>E2DH</fullName>
    </alternativeName>
    <alternativeName>
        <fullName>Estradiol 17-beta-dehydrogenase 2</fullName>
        <ecNumber evidence="3 4 5">1.1.1.62</ecNumber>
    </alternativeName>
    <alternativeName>
        <fullName>Microsomal 17-beta-hydroxysteroid dehydrogenase</fullName>
    </alternativeName>
    <alternativeName>
        <fullName>Short chain dehydrogenase/reductase family 9C member 2</fullName>
    </alternativeName>
    <alternativeName>
        <fullName>Testosterone 17-beta-dehydrogenase</fullName>
        <ecNumber evidence="3 4 5">1.1.1.239</ecNumber>
    </alternativeName>
</protein>
<evidence type="ECO:0000250" key="1"/>
<evidence type="ECO:0000255" key="2"/>
<evidence type="ECO:0000269" key="3">
    <source>
    </source>
</evidence>
<evidence type="ECO:0000269" key="4">
    <source>
    </source>
</evidence>
<evidence type="ECO:0000269" key="5">
    <source>
    </source>
</evidence>
<evidence type="ECO:0000269" key="6">
    <source ref="3"/>
</evidence>
<evidence type="ECO:0000305" key="7"/>
<evidence type="ECO:0000305" key="8">
    <source>
    </source>
</evidence>
<evidence type="ECO:0000305" key="9">
    <source>
    </source>
</evidence>
<evidence type="ECO:0000312" key="10">
    <source>
        <dbReference type="HGNC" id="HGNC:5211"/>
    </source>
</evidence>
<name>DHB2_HUMAN</name>
<sequence length="387" mass="42785">MSTFFSDTAWICLAVPTVLCGTVFCKYKKSSGQLWSWMVCLAGLCAVCLLILSPFWGLILFSVSCFLMYTYLSGQELLPVDQKAVLVTGGDCGLGHALCKYLDELGFTVFAGVLNENGPGAEELRRTCSPRLSVLQMDITKPVQIKDAYSKVAAMLQDRGLWAVINNAGVLGFPTDGELLLMTDYKQCMAVNFFGTVEVTKTFLPLLRKSKGRLVNVSSMGGGAPMERLASYGSSKAAVTMFSSVMRLELSKWGIKVASIQPGGFLTNIAGTSDKWEKLEKDILDHLPAEVQEDYGQDYILAQRNFLLLINSLASKDFSPVLRDIQHAILAKSPFAYYTPGKGAYLWICLAHYLPIGIYDYFAKRHFGQDKPMPRALRMPNYKKKAT</sequence>
<proteinExistence type="evidence at protein level"/>
<accession>P37059</accession>
<accession>B2R7T4</accession>
<organism>
    <name type="scientific">Homo sapiens</name>
    <name type="common">Human</name>
    <dbReference type="NCBI Taxonomy" id="9606"/>
    <lineage>
        <taxon>Eukaryota</taxon>
        <taxon>Metazoa</taxon>
        <taxon>Chordata</taxon>
        <taxon>Craniata</taxon>
        <taxon>Vertebrata</taxon>
        <taxon>Euteleostomi</taxon>
        <taxon>Mammalia</taxon>
        <taxon>Eutheria</taxon>
        <taxon>Euarchontoglires</taxon>
        <taxon>Primates</taxon>
        <taxon>Haplorrhini</taxon>
        <taxon>Catarrhini</taxon>
        <taxon>Hominidae</taxon>
        <taxon>Homo</taxon>
    </lineage>
</organism>
<feature type="chain" id="PRO_0000054570" description="17-beta-hydroxysteroid dehydrogenase type 2">
    <location>
        <begin position="1"/>
        <end position="387"/>
    </location>
</feature>
<feature type="transmembrane region" description="Helical; Signal-anchor for type II membrane protein" evidence="2">
    <location>
        <begin position="4"/>
        <end position="24"/>
    </location>
</feature>
<feature type="active site" evidence="1">
    <location>
        <position position="232"/>
    </location>
</feature>
<feature type="binding site" evidence="1">
    <location>
        <begin position="82"/>
        <end position="111"/>
    </location>
    <ligand>
        <name>NAD(+)</name>
        <dbReference type="ChEBI" id="CHEBI:57540"/>
    </ligand>
</feature>
<feature type="binding site" evidence="1">
    <location>
        <position position="219"/>
    </location>
    <ligand>
        <name>substrate</name>
    </ligand>
</feature>
<feature type="sequence variant" id="VAR_018852" description="In dbSNP:rs8191136." evidence="6">
    <original>A</original>
    <variation>T</variation>
    <location>
        <position position="121"/>
    </location>
</feature>
<gene>
    <name evidence="10" type="primary">HSD17B2</name>
    <name type="synonym">EDH17B2</name>
    <name type="synonym">SDR9C2</name>
</gene>
<reference key="1">
    <citation type="journal article" date="1993" name="J. Biol. Chem.">
        <title>Expression cloning and characterization of human 17 beta-hydroxysteroid dehydrogenase type 2, a microsomal enzyme possessing 20 alpha-hydroxysteroid dehydrogenase activity.</title>
        <authorList>
            <person name="Wu L."/>
            <person name="Einstein M."/>
            <person name="Geissler W.M."/>
            <person name="Chan H.K."/>
            <person name="Elliston K.O."/>
            <person name="Andersson S."/>
        </authorList>
    </citation>
    <scope>NUCLEOTIDE SEQUENCE [MRNA]</scope>
    <scope>BIOPHYSICOCHEMICAL PROPERTIES</scope>
    <scope>CATALYTIC ACTIVITY</scope>
    <scope>FUNCTION</scope>
    <source>
        <tissue>Prostate</tissue>
    </source>
</reference>
<reference key="2">
    <citation type="journal article" date="1995" name="DNA Cell Biol.">
        <title>The human type II 17 beta-hydroxysteroid dehydrogenase gene encodes two alternatively spliced mRNA species.</title>
        <authorList>
            <person name="Labrie Y."/>
            <person name="Durocher F."/>
            <person name="Lachance Y."/>
            <person name="Turgeon C."/>
            <person name="Simard J."/>
            <person name="Labrie C."/>
            <person name="Labrie F."/>
        </authorList>
    </citation>
    <scope>NUCLEOTIDE SEQUENCE [GENOMIC DNA]</scope>
</reference>
<reference key="3">
    <citation type="submission" date="2003-06" db="EMBL/GenBank/DDBJ databases">
        <authorList>
            <consortium name="NIEHS SNPs program"/>
        </authorList>
    </citation>
    <scope>NUCLEOTIDE SEQUENCE [GENOMIC DNA]</scope>
    <scope>VARIANT THR-121</scope>
</reference>
<reference key="4">
    <citation type="journal article" date="2004" name="Nat. Genet.">
        <title>Complete sequencing and characterization of 21,243 full-length human cDNAs.</title>
        <authorList>
            <person name="Ota T."/>
            <person name="Suzuki Y."/>
            <person name="Nishikawa T."/>
            <person name="Otsuki T."/>
            <person name="Sugiyama T."/>
            <person name="Irie R."/>
            <person name="Wakamatsu A."/>
            <person name="Hayashi K."/>
            <person name="Sato H."/>
            <person name="Nagai K."/>
            <person name="Kimura K."/>
            <person name="Makita H."/>
            <person name="Sekine M."/>
            <person name="Obayashi M."/>
            <person name="Nishi T."/>
            <person name="Shibahara T."/>
            <person name="Tanaka T."/>
            <person name="Ishii S."/>
            <person name="Yamamoto J."/>
            <person name="Saito K."/>
            <person name="Kawai Y."/>
            <person name="Isono Y."/>
            <person name="Nakamura Y."/>
            <person name="Nagahari K."/>
            <person name="Murakami K."/>
            <person name="Yasuda T."/>
            <person name="Iwayanagi T."/>
            <person name="Wagatsuma M."/>
            <person name="Shiratori A."/>
            <person name="Sudo H."/>
            <person name="Hosoiri T."/>
            <person name="Kaku Y."/>
            <person name="Kodaira H."/>
            <person name="Kondo H."/>
            <person name="Sugawara M."/>
            <person name="Takahashi M."/>
            <person name="Kanda K."/>
            <person name="Yokoi T."/>
            <person name="Furuya T."/>
            <person name="Kikkawa E."/>
            <person name="Omura Y."/>
            <person name="Abe K."/>
            <person name="Kamihara K."/>
            <person name="Katsuta N."/>
            <person name="Sato K."/>
            <person name="Tanikawa M."/>
            <person name="Yamazaki M."/>
            <person name="Ninomiya K."/>
            <person name="Ishibashi T."/>
            <person name="Yamashita H."/>
            <person name="Murakawa K."/>
            <person name="Fujimori K."/>
            <person name="Tanai H."/>
            <person name="Kimata M."/>
            <person name="Watanabe M."/>
            <person name="Hiraoka S."/>
            <person name="Chiba Y."/>
            <person name="Ishida S."/>
            <person name="Ono Y."/>
            <person name="Takiguchi S."/>
            <person name="Watanabe S."/>
            <person name="Yosida M."/>
            <person name="Hotuta T."/>
            <person name="Kusano J."/>
            <person name="Kanehori K."/>
            <person name="Takahashi-Fujii A."/>
            <person name="Hara H."/>
            <person name="Tanase T.-O."/>
            <person name="Nomura Y."/>
            <person name="Togiya S."/>
            <person name="Komai F."/>
            <person name="Hara R."/>
            <person name="Takeuchi K."/>
            <person name="Arita M."/>
            <person name="Imose N."/>
            <person name="Musashino K."/>
            <person name="Yuuki H."/>
            <person name="Oshima A."/>
            <person name="Sasaki N."/>
            <person name="Aotsuka S."/>
            <person name="Yoshikawa Y."/>
            <person name="Matsunawa H."/>
            <person name="Ichihara T."/>
            <person name="Shiohata N."/>
            <person name="Sano S."/>
            <person name="Moriya S."/>
            <person name="Momiyama H."/>
            <person name="Satoh N."/>
            <person name="Takami S."/>
            <person name="Terashima Y."/>
            <person name="Suzuki O."/>
            <person name="Nakagawa S."/>
            <person name="Senoh A."/>
            <person name="Mizoguchi H."/>
            <person name="Goto Y."/>
            <person name="Shimizu F."/>
            <person name="Wakebe H."/>
            <person name="Hishigaki H."/>
            <person name="Watanabe T."/>
            <person name="Sugiyama A."/>
            <person name="Takemoto M."/>
            <person name="Kawakami B."/>
            <person name="Yamazaki M."/>
            <person name="Watanabe K."/>
            <person name="Kumagai A."/>
            <person name="Itakura S."/>
            <person name="Fukuzumi Y."/>
            <person name="Fujimori Y."/>
            <person name="Komiyama M."/>
            <person name="Tashiro H."/>
            <person name="Tanigami A."/>
            <person name="Fujiwara T."/>
            <person name="Ono T."/>
            <person name="Yamada K."/>
            <person name="Fujii Y."/>
            <person name="Ozaki K."/>
            <person name="Hirao M."/>
            <person name="Ohmori Y."/>
            <person name="Kawabata A."/>
            <person name="Hikiji T."/>
            <person name="Kobatake N."/>
            <person name="Inagaki H."/>
            <person name="Ikema Y."/>
            <person name="Okamoto S."/>
            <person name="Okitani R."/>
            <person name="Kawakami T."/>
            <person name="Noguchi S."/>
            <person name="Itoh T."/>
            <person name="Shigeta K."/>
            <person name="Senba T."/>
            <person name="Matsumura K."/>
            <person name="Nakajima Y."/>
            <person name="Mizuno T."/>
            <person name="Morinaga M."/>
            <person name="Sasaki M."/>
            <person name="Togashi T."/>
            <person name="Oyama M."/>
            <person name="Hata H."/>
            <person name="Watanabe M."/>
            <person name="Komatsu T."/>
            <person name="Mizushima-Sugano J."/>
            <person name="Satoh T."/>
            <person name="Shirai Y."/>
            <person name="Takahashi Y."/>
            <person name="Nakagawa K."/>
            <person name="Okumura K."/>
            <person name="Nagase T."/>
            <person name="Nomura N."/>
            <person name="Kikuchi H."/>
            <person name="Masuho Y."/>
            <person name="Yamashita R."/>
            <person name="Nakai K."/>
            <person name="Yada T."/>
            <person name="Nakamura Y."/>
            <person name="Ohara O."/>
            <person name="Isogai T."/>
            <person name="Sugano S."/>
        </authorList>
    </citation>
    <scope>NUCLEOTIDE SEQUENCE [LARGE SCALE MRNA]</scope>
    <source>
        <tissue>Colon</tissue>
    </source>
</reference>
<reference key="5">
    <citation type="submission" date="2005-09" db="EMBL/GenBank/DDBJ databases">
        <authorList>
            <person name="Mural R.J."/>
            <person name="Istrail S."/>
            <person name="Sutton G.G."/>
            <person name="Florea L."/>
            <person name="Halpern A.L."/>
            <person name="Mobarry C.M."/>
            <person name="Lippert R."/>
            <person name="Walenz B."/>
            <person name="Shatkay H."/>
            <person name="Dew I."/>
            <person name="Miller J.R."/>
            <person name="Flanigan M.J."/>
            <person name="Edwards N.J."/>
            <person name="Bolanos R."/>
            <person name="Fasulo D."/>
            <person name="Halldorsson B.V."/>
            <person name="Hannenhalli S."/>
            <person name="Turner R."/>
            <person name="Yooseph S."/>
            <person name="Lu F."/>
            <person name="Nusskern D.R."/>
            <person name="Shue B.C."/>
            <person name="Zheng X.H."/>
            <person name="Zhong F."/>
            <person name="Delcher A.L."/>
            <person name="Huson D.H."/>
            <person name="Kravitz S.A."/>
            <person name="Mouchard L."/>
            <person name="Reinert K."/>
            <person name="Remington K.A."/>
            <person name="Clark A.G."/>
            <person name="Waterman M.S."/>
            <person name="Eichler E.E."/>
            <person name="Adams M.D."/>
            <person name="Hunkapiller M.W."/>
            <person name="Myers E.W."/>
            <person name="Venter J.C."/>
        </authorList>
    </citation>
    <scope>NUCLEOTIDE SEQUENCE [LARGE SCALE GENOMIC DNA]</scope>
</reference>
<reference key="6">
    <citation type="journal article" date="2004" name="Genome Res.">
        <title>The status, quality, and expansion of the NIH full-length cDNA project: the Mammalian Gene Collection (MGC).</title>
        <authorList>
            <consortium name="The MGC Project Team"/>
        </authorList>
    </citation>
    <scope>NUCLEOTIDE SEQUENCE [LARGE SCALE MRNA]</scope>
    <source>
        <tissue>Bone marrow</tissue>
    </source>
</reference>
<reference key="7">
    <citation type="journal article" date="1999" name="Endocrinology">
        <title>Characterization of molecular and catalytic properties of intact and truncated human 17beta-hydroxysteroid dehydrogenase type 2 enzymes: intracellular localization of the wild-type enzyme in the endoplasmic reticulum.</title>
        <authorList>
            <person name="Puranen T.J."/>
            <person name="Kurkela R.M."/>
            <person name="Lakkakorpi J.T."/>
            <person name="Poutanen M.H."/>
            <person name="Itaeranta P.V."/>
            <person name="Melis J.P."/>
            <person name="Ghosh D."/>
            <person name="Vihko R.K."/>
            <person name="Vihko P.T."/>
        </authorList>
    </citation>
    <scope>SUBCELLULAR LOCATION</scope>
    <scope>FUNCTION</scope>
    <scope>CATALYTIC ACTIVITY</scope>
</reference>
<reference key="8">
    <citation type="journal article" date="2011" name="BMC Syst. Biol.">
        <title>Initial characterization of the human central proteome.</title>
        <authorList>
            <person name="Burkard T.R."/>
            <person name="Planyavsky M."/>
            <person name="Kaupe I."/>
            <person name="Breitwieser F.P."/>
            <person name="Buerckstuemmer T."/>
            <person name="Bennett K.L."/>
            <person name="Superti-Furga G."/>
            <person name="Colinge J."/>
        </authorList>
    </citation>
    <scope>IDENTIFICATION BY MASS SPECTROMETRY [LARGE SCALE ANALYSIS]</scope>
</reference>
<reference key="9">
    <citation type="journal article" date="2014" name="J. Proteomics">
        <title>An enzyme assisted RP-RPLC approach for in-depth analysis of human liver phosphoproteome.</title>
        <authorList>
            <person name="Bian Y."/>
            <person name="Song C."/>
            <person name="Cheng K."/>
            <person name="Dong M."/>
            <person name="Wang F."/>
            <person name="Huang J."/>
            <person name="Sun D."/>
            <person name="Wang L."/>
            <person name="Ye M."/>
            <person name="Zou H."/>
        </authorList>
    </citation>
    <scope>IDENTIFICATION BY MASS SPECTROMETRY [LARGE SCALE ANALYSIS]</scope>
    <source>
        <tissue>Liver</tissue>
    </source>
</reference>
<reference key="10">
    <citation type="journal article" date="2002" name="J. Biol. Chem.">
        <title>Purification, reconstitution, and steady-state kinetics of the trans-membrane 17 beta-hydroxysteroid dehydrogenase 2.</title>
        <authorList>
            <person name="Lu M.L."/>
            <person name="Huang Y.W."/>
            <person name="Lin S.X."/>
        </authorList>
    </citation>
    <scope>FUNCTION</scope>
    <scope>CATALYTIC ACTIVITY</scope>
    <scope>BIOPHYSICOCHEMICAL PROPERTIES</scope>
    <scope>SUBUNIT</scope>
</reference>
<comment type="function">
    <text evidence="3 4 5">Catalyzes the NAD-dependent oxidation of the highly active 17beta-hydroxysteroids, such as estradiol (E2), testosterone (T), and dihydrotestosterone (DHT), to their less active forms and thus regulates the biological potency of these steroids. Oxidizes estradiol to estrone, testosterone to androstenedione, and dihydrotestosterone to 5alpha-androstan-3,17-dione. Also has 20-alpha-HSD activity.</text>
</comment>
<comment type="catalytic activity">
    <reaction evidence="3 4 5">
        <text>17beta-estradiol + NAD(+) = estrone + NADH + H(+)</text>
        <dbReference type="Rhea" id="RHEA:24612"/>
        <dbReference type="ChEBI" id="CHEBI:15378"/>
        <dbReference type="ChEBI" id="CHEBI:16469"/>
        <dbReference type="ChEBI" id="CHEBI:17263"/>
        <dbReference type="ChEBI" id="CHEBI:57540"/>
        <dbReference type="ChEBI" id="CHEBI:57945"/>
        <dbReference type="EC" id="1.1.1.62"/>
    </reaction>
    <physiologicalReaction direction="left-to-right" evidence="8 9">
        <dbReference type="Rhea" id="RHEA:24613"/>
    </physiologicalReaction>
</comment>
<comment type="catalytic activity">
    <reaction evidence="3 4 5">
        <text>testosterone + NAD(+) = androst-4-ene-3,17-dione + NADH + H(+)</text>
        <dbReference type="Rhea" id="RHEA:14929"/>
        <dbReference type="ChEBI" id="CHEBI:15378"/>
        <dbReference type="ChEBI" id="CHEBI:16422"/>
        <dbReference type="ChEBI" id="CHEBI:17347"/>
        <dbReference type="ChEBI" id="CHEBI:57540"/>
        <dbReference type="ChEBI" id="CHEBI:57945"/>
        <dbReference type="EC" id="1.1.1.239"/>
    </reaction>
    <physiologicalReaction direction="left-to-right" evidence="9">
        <dbReference type="Rhea" id="RHEA:14930"/>
    </physiologicalReaction>
</comment>
<comment type="catalytic activity">
    <reaction evidence="3 4 5">
        <text>17beta-hydroxy-5alpha-androstan-3-one + NAD(+) = 5alpha-androstan-3,17-dione + NADH + H(+)</text>
        <dbReference type="Rhea" id="RHEA:41992"/>
        <dbReference type="ChEBI" id="CHEBI:15378"/>
        <dbReference type="ChEBI" id="CHEBI:15994"/>
        <dbReference type="ChEBI" id="CHEBI:16330"/>
        <dbReference type="ChEBI" id="CHEBI:57540"/>
        <dbReference type="ChEBI" id="CHEBI:57945"/>
    </reaction>
</comment>
<comment type="catalytic activity">
    <reaction evidence="3 4 5">
        <text>(20S)-hydroxypregn-4-en-3-one + NAD(+) = progesterone + NADH + H(+)</text>
        <dbReference type="Rhea" id="RHEA:42108"/>
        <dbReference type="ChEBI" id="CHEBI:15378"/>
        <dbReference type="ChEBI" id="CHEBI:17026"/>
        <dbReference type="ChEBI" id="CHEBI:28453"/>
        <dbReference type="ChEBI" id="CHEBI:57540"/>
        <dbReference type="ChEBI" id="CHEBI:57945"/>
    </reaction>
</comment>
<comment type="biophysicochemical properties">
    <kinetics>
        <KM evidence="5">0.21 uM for estradiol</KM>
        <KM evidence="5">0.39 uM for testosterone</KM>
        <KM evidence="5">0.31 uM for dihydrotestosterone</KM>
        <KM evidence="5">0.71 uM for 20-alpha-dihydroprogesterone</KM>
        <KM evidence="5">2.63 uM for androstenedione</KM>
        <KM evidence="5">0.78 uM for estrone</KM>
        <KM evidence="4">110 uM for NAD</KM>
        <KM evidence="4">9600 uM for NADP</KM>
        <KM evidence="4">0.35 uM for estradiol</KM>
        <KM evidence="4">0.61 uM for testosterone</KM>
        <KM evidence="4">0.25 uM for dihydrotestosterone</KM>
        <KM evidence="4">0.53 uM for 20-alpha-dihydroprogesterone</KM>
        <Vmax evidence="5">38.0 nmol/min/mg enzyme with estradiol as substrate</Vmax>
        <Vmax evidence="5">45.0 nmol/min/mg enzyme with testosterone as substrate</Vmax>
        <Vmax evidence="5">38.0 nmol/min/mg enzyme with dihydrotestosterone as substrate</Vmax>
        <Vmax evidence="5">5.6 nmol/min/mg enzyme with 20-alpha-dihydroprogesterone as substrate</Vmax>
        <Vmax evidence="5">6.6 nmol/min/mg enzyme with estrone as substrate</Vmax>
        <Vmax evidence="5">11.5 nmol/min/mg enzyme with androstenedione as substrate</Vmax>
    </kinetics>
    <phDependence>
        <text evidence="5">Optimum pH is 9 with testosterone and estradiol as substrates and 5.5 with androstenedione and estrone as substrates.</text>
    </phDependence>
</comment>
<comment type="subunit">
    <text evidence="4">Homodimer.</text>
</comment>
<comment type="interaction">
    <interactant intactId="EBI-11724790">
        <id>P37059</id>
    </interactant>
    <interactant intactId="EBI-4403663">
        <id>Q96RQ1</id>
        <label>ERGIC2</label>
    </interactant>
    <organismsDiffer>false</organismsDiffer>
    <experiments>3</experiments>
</comment>
<comment type="subcellular location">
    <subcellularLocation>
        <location evidence="3">Endoplasmic reticulum membrane</location>
        <topology evidence="7">Single-pass type II membrane protein</topology>
    </subcellularLocation>
</comment>
<comment type="tissue specificity">
    <text evidence="5">Expressed in placenta.</text>
</comment>
<comment type="similarity">
    <text evidence="7">Belongs to the short-chain dehydrogenases/reductases (SDR) family.</text>
</comment>